<reference key="1">
    <citation type="journal article" date="1990" name="Mol. Microbiol.">
        <title>Nucleotide sequence and expression of an operon in Escherichia coli coding for formate hydrogenlyase components.</title>
        <authorList>
            <person name="Boehm R."/>
            <person name="Sauter M."/>
            <person name="Boeck A."/>
        </authorList>
    </citation>
    <scope>NUCLEOTIDE SEQUENCE [GENOMIC DNA]</scope>
    <source>
        <strain>K12 / MC4100 / ATCC 35695 / DSM 6574</strain>
    </source>
</reference>
<reference key="2">
    <citation type="journal article" date="1997" name="Science">
        <title>The complete genome sequence of Escherichia coli K-12.</title>
        <authorList>
            <person name="Blattner F.R."/>
            <person name="Plunkett G. III"/>
            <person name="Bloch C.A."/>
            <person name="Perna N.T."/>
            <person name="Burland V."/>
            <person name="Riley M."/>
            <person name="Collado-Vides J."/>
            <person name="Glasner J.D."/>
            <person name="Rode C.K."/>
            <person name="Mayhew G.F."/>
            <person name="Gregor J."/>
            <person name="Davis N.W."/>
            <person name="Kirkpatrick H.A."/>
            <person name="Goeden M.A."/>
            <person name="Rose D.J."/>
            <person name="Mau B."/>
            <person name="Shao Y."/>
        </authorList>
    </citation>
    <scope>NUCLEOTIDE SEQUENCE [LARGE SCALE GENOMIC DNA]</scope>
    <source>
        <strain>K12 / MG1655 / ATCC 47076</strain>
    </source>
</reference>
<reference key="3">
    <citation type="journal article" date="2006" name="Mol. Syst. Biol.">
        <title>Highly accurate genome sequences of Escherichia coli K-12 strains MG1655 and W3110.</title>
        <authorList>
            <person name="Hayashi K."/>
            <person name="Morooka N."/>
            <person name="Yamamoto Y."/>
            <person name="Fujita K."/>
            <person name="Isono K."/>
            <person name="Choi S."/>
            <person name="Ohtsubo E."/>
            <person name="Baba T."/>
            <person name="Wanner B.L."/>
            <person name="Mori H."/>
            <person name="Horiuchi T."/>
        </authorList>
    </citation>
    <scope>NUCLEOTIDE SEQUENCE [LARGE SCALE GENOMIC DNA]</scope>
    <source>
        <strain>K12 / W3110 / ATCC 27325 / DSM 5911</strain>
    </source>
</reference>
<protein>
    <recommendedName>
        <fullName>Formate hydrogenlyase subunit 6</fullName>
        <shortName>FHL subunit 6</shortName>
    </recommendedName>
    <alternativeName>
        <fullName>Hydrogenase-3 component F</fullName>
    </alternativeName>
</protein>
<accession>P16432</accession>
<accession>Q2MAA9</accession>
<proteinExistence type="evidence at protein level"/>
<name>HYCF_ECOLI</name>
<gene>
    <name type="primary">hycF</name>
    <name type="synonym">hevF</name>
    <name type="ordered locus">b2720</name>
    <name type="ordered locus">JW2690</name>
</gene>
<comment type="function">
    <text>Probable electron transfer protein for hydrogenase 3.</text>
</comment>
<comment type="subunit">
    <text>FHL comprises of a formate dehydrogenase, unidentified electron carriers and a hydrogenase (isoenzyme 3). In this non-energy conserving pathway, molecular hydrogen and carbodioxide are released from formate.</text>
</comment>
<keyword id="KW-0002">3D-structure</keyword>
<keyword id="KW-0004">4Fe-4S</keyword>
<keyword id="KW-0249">Electron transport</keyword>
<keyword id="KW-0408">Iron</keyword>
<keyword id="KW-0411">Iron-sulfur</keyword>
<keyword id="KW-0479">Metal-binding</keyword>
<keyword id="KW-1185">Reference proteome</keyword>
<keyword id="KW-0677">Repeat</keyword>
<keyword id="KW-0813">Transport</keyword>
<sequence length="180" mass="20309">MFTFIKKVIKTGTATSSYPLEPIAVDKNFRGKPEQNPQQCIGCAACVNACPSNALTVETDLATGELAWEFNLGHCIFCGRCEEVCPTAAIKLSQEYELAVWKKEDFLQQSRFALCNCRVCNRPFAVQKEIDYAIALLKHNGDSRAENHRESFETCPECKRQKCLVPSDRIELTRHMKEAI</sequence>
<evidence type="ECO:0000250" key="1"/>
<evidence type="ECO:0000255" key="2">
    <source>
        <dbReference type="PROSITE-ProRule" id="PRU00711"/>
    </source>
</evidence>
<evidence type="ECO:0007829" key="3">
    <source>
        <dbReference type="PDB" id="7Z0S"/>
    </source>
</evidence>
<dbReference type="EMBL" id="X17506">
    <property type="protein sequence ID" value="CAA35551.1"/>
    <property type="molecule type" value="Genomic_DNA"/>
</dbReference>
<dbReference type="EMBL" id="U29579">
    <property type="protein sequence ID" value="AAA69230.1"/>
    <property type="molecule type" value="Genomic_DNA"/>
</dbReference>
<dbReference type="EMBL" id="U00096">
    <property type="protein sequence ID" value="AAC75762.1"/>
    <property type="molecule type" value="Genomic_DNA"/>
</dbReference>
<dbReference type="EMBL" id="AP009048">
    <property type="protein sequence ID" value="BAE76797.1"/>
    <property type="molecule type" value="Genomic_DNA"/>
</dbReference>
<dbReference type="PIR" id="S08624">
    <property type="entry name" value="S08624"/>
</dbReference>
<dbReference type="RefSeq" id="NP_417200.1">
    <property type="nucleotide sequence ID" value="NC_000913.3"/>
</dbReference>
<dbReference type="RefSeq" id="WP_000493781.1">
    <property type="nucleotide sequence ID" value="NZ_LN832404.1"/>
</dbReference>
<dbReference type="PDB" id="7Z0S">
    <property type="method" value="EM"/>
    <property type="resolution" value="2.60 A"/>
    <property type="chains" value="F=1-180"/>
</dbReference>
<dbReference type="PDB" id="7Z0T">
    <property type="method" value="EM"/>
    <property type="resolution" value="3.40 A"/>
    <property type="chains" value="F=1-180"/>
</dbReference>
<dbReference type="PDBsum" id="7Z0S"/>
<dbReference type="PDBsum" id="7Z0T"/>
<dbReference type="EMDB" id="EMD-14429"/>
<dbReference type="EMDB" id="EMD-14430"/>
<dbReference type="SMR" id="P16432"/>
<dbReference type="BioGRID" id="4262940">
    <property type="interactions" value="17"/>
</dbReference>
<dbReference type="BioGRID" id="851386">
    <property type="interactions" value="1"/>
</dbReference>
<dbReference type="ComplexPortal" id="CPX-317">
    <property type="entry name" value="Formate hydrogenlyase-H/Hydrogenase-3 complex"/>
</dbReference>
<dbReference type="FunCoup" id="P16432">
    <property type="interactions" value="62"/>
</dbReference>
<dbReference type="IntAct" id="P16432">
    <property type="interactions" value="10"/>
</dbReference>
<dbReference type="MINT" id="P16432"/>
<dbReference type="STRING" id="511145.b2720"/>
<dbReference type="TCDB" id="3.D.1.9.2">
    <property type="family name" value="the h+ or na+-translocating nadh dehydrogenase (ndh) family"/>
</dbReference>
<dbReference type="PaxDb" id="511145-b2720"/>
<dbReference type="EnsemblBacteria" id="AAC75762">
    <property type="protein sequence ID" value="AAC75762"/>
    <property type="gene ID" value="b2720"/>
</dbReference>
<dbReference type="GeneID" id="947048"/>
<dbReference type="KEGG" id="ecj:JW2690"/>
<dbReference type="KEGG" id="eco:b2720"/>
<dbReference type="KEGG" id="ecoc:C3026_14965"/>
<dbReference type="PATRIC" id="fig|1411691.4.peg.4021"/>
<dbReference type="EchoBASE" id="EB0474"/>
<dbReference type="eggNOG" id="COG1143">
    <property type="taxonomic scope" value="Bacteria"/>
</dbReference>
<dbReference type="HOGENOM" id="CLU_067218_3_1_6"/>
<dbReference type="InParanoid" id="P16432"/>
<dbReference type="OMA" id="EHHRESF"/>
<dbReference type="OrthoDB" id="9808559at2"/>
<dbReference type="PhylomeDB" id="P16432"/>
<dbReference type="BioCyc" id="EcoCyc:HYCF-MONOMER"/>
<dbReference type="BioCyc" id="MetaCyc:HYCF-MONOMER"/>
<dbReference type="PRO" id="PR:P16432"/>
<dbReference type="Proteomes" id="UP000000625">
    <property type="component" value="Chromosome"/>
</dbReference>
<dbReference type="GO" id="GO:0009326">
    <property type="term" value="C:formate dehydrogenase complex"/>
    <property type="evidence" value="ECO:0000353"/>
    <property type="project" value="ComplexPortal"/>
</dbReference>
<dbReference type="GO" id="GO:0016020">
    <property type="term" value="C:membrane"/>
    <property type="evidence" value="ECO:0007669"/>
    <property type="project" value="InterPro"/>
</dbReference>
<dbReference type="GO" id="GO:0051539">
    <property type="term" value="F:4 iron, 4 sulfur cluster binding"/>
    <property type="evidence" value="ECO:0007669"/>
    <property type="project" value="UniProtKB-KW"/>
</dbReference>
<dbReference type="GO" id="GO:0046872">
    <property type="term" value="F:metal ion binding"/>
    <property type="evidence" value="ECO:0007669"/>
    <property type="project" value="UniProtKB-KW"/>
</dbReference>
<dbReference type="GO" id="GO:0016651">
    <property type="term" value="F:oxidoreductase activity, acting on NAD(P)H"/>
    <property type="evidence" value="ECO:0007669"/>
    <property type="project" value="InterPro"/>
</dbReference>
<dbReference type="GO" id="GO:0009060">
    <property type="term" value="P:aerobic respiration"/>
    <property type="evidence" value="ECO:0000318"/>
    <property type="project" value="GO_Central"/>
</dbReference>
<dbReference type="GO" id="GO:0019645">
    <property type="term" value="P:anaerobic electron transport chain"/>
    <property type="evidence" value="ECO:0000314"/>
    <property type="project" value="ComplexPortal"/>
</dbReference>
<dbReference type="GO" id="GO:0009061">
    <property type="term" value="P:anaerobic respiration"/>
    <property type="evidence" value="ECO:0000314"/>
    <property type="project" value="ComplexPortal"/>
</dbReference>
<dbReference type="GO" id="GO:0015944">
    <property type="term" value="P:formate oxidation"/>
    <property type="evidence" value="ECO:0000314"/>
    <property type="project" value="ComplexPortal"/>
</dbReference>
<dbReference type="GO" id="GO:0006007">
    <property type="term" value="P:glucose catabolic process"/>
    <property type="evidence" value="ECO:0000314"/>
    <property type="project" value="ComplexPortal"/>
</dbReference>
<dbReference type="CDD" id="cd10549">
    <property type="entry name" value="MtMvhB_like"/>
    <property type="match status" value="1"/>
</dbReference>
<dbReference type="FunFam" id="3.30.70.3270:FF:000005">
    <property type="entry name" value="Formate hydrogenlyase complex iron-sulfur subunit"/>
    <property type="match status" value="1"/>
</dbReference>
<dbReference type="Gene3D" id="3.30.70.3270">
    <property type="match status" value="1"/>
</dbReference>
<dbReference type="InterPro" id="IPR017896">
    <property type="entry name" value="4Fe4S_Fe-S-bd"/>
</dbReference>
<dbReference type="InterPro" id="IPR017900">
    <property type="entry name" value="4Fe4S_Fe_S_CS"/>
</dbReference>
<dbReference type="InterPro" id="IPR010226">
    <property type="entry name" value="NADH_quinone_OxRdtase_chainI"/>
</dbReference>
<dbReference type="NCBIfam" id="NF009053">
    <property type="entry name" value="PRK12387.1"/>
    <property type="match status" value="1"/>
</dbReference>
<dbReference type="PANTHER" id="PTHR10849:SF35">
    <property type="entry name" value="FORMATE HYDROGENLYASE SUBUNIT 6-RELATED"/>
    <property type="match status" value="1"/>
</dbReference>
<dbReference type="PANTHER" id="PTHR10849">
    <property type="entry name" value="NADH DEHYDROGENASE UBIQUINONE IRON-SULFUR PROTEIN 8, MITOCHONDRIAL"/>
    <property type="match status" value="1"/>
</dbReference>
<dbReference type="Pfam" id="PF12838">
    <property type="entry name" value="Fer4_7"/>
    <property type="match status" value="1"/>
</dbReference>
<dbReference type="SUPFAM" id="SSF54862">
    <property type="entry name" value="4Fe-4S ferredoxins"/>
    <property type="match status" value="1"/>
</dbReference>
<dbReference type="PROSITE" id="PS00198">
    <property type="entry name" value="4FE4S_FER_1"/>
    <property type="match status" value="2"/>
</dbReference>
<dbReference type="PROSITE" id="PS51379">
    <property type="entry name" value="4FE4S_FER_2"/>
    <property type="match status" value="2"/>
</dbReference>
<organism>
    <name type="scientific">Escherichia coli (strain K12)</name>
    <dbReference type="NCBI Taxonomy" id="83333"/>
    <lineage>
        <taxon>Bacteria</taxon>
        <taxon>Pseudomonadati</taxon>
        <taxon>Pseudomonadota</taxon>
        <taxon>Gammaproteobacteria</taxon>
        <taxon>Enterobacterales</taxon>
        <taxon>Enterobacteriaceae</taxon>
        <taxon>Escherichia</taxon>
    </lineage>
</organism>
<feature type="chain" id="PRO_0000159266" description="Formate hydrogenlyase subunit 6">
    <location>
        <begin position="1"/>
        <end position="180"/>
    </location>
</feature>
<feature type="domain" description="4Fe-4S ferredoxin-type 1" evidence="2">
    <location>
        <begin position="31"/>
        <end position="60"/>
    </location>
</feature>
<feature type="domain" description="4Fe-4S ferredoxin-type 2" evidence="2">
    <location>
        <begin position="66"/>
        <end position="95"/>
    </location>
</feature>
<feature type="binding site" evidence="1">
    <location>
        <position position="40"/>
    </location>
    <ligand>
        <name>[4Fe-4S] cluster</name>
        <dbReference type="ChEBI" id="CHEBI:49883"/>
        <label>1</label>
    </ligand>
</feature>
<feature type="binding site" evidence="1">
    <location>
        <position position="43"/>
    </location>
    <ligand>
        <name>[4Fe-4S] cluster</name>
        <dbReference type="ChEBI" id="CHEBI:49883"/>
        <label>1</label>
    </ligand>
</feature>
<feature type="binding site" evidence="1">
    <location>
        <position position="46"/>
    </location>
    <ligand>
        <name>[4Fe-4S] cluster</name>
        <dbReference type="ChEBI" id="CHEBI:49883"/>
        <label>1</label>
    </ligand>
</feature>
<feature type="binding site" evidence="1">
    <location>
        <position position="50"/>
    </location>
    <ligand>
        <name>[4Fe-4S] cluster</name>
        <dbReference type="ChEBI" id="CHEBI:49883"/>
        <label>1</label>
    </ligand>
</feature>
<feature type="binding site" evidence="1">
    <location>
        <position position="75"/>
    </location>
    <ligand>
        <name>[4Fe-4S] cluster</name>
        <dbReference type="ChEBI" id="CHEBI:49883"/>
        <label>2</label>
    </ligand>
</feature>
<feature type="binding site" evidence="1">
    <location>
        <position position="78"/>
    </location>
    <ligand>
        <name>[4Fe-4S] cluster</name>
        <dbReference type="ChEBI" id="CHEBI:49883"/>
        <label>2</label>
    </ligand>
</feature>
<feature type="binding site" evidence="1">
    <location>
        <position position="81"/>
    </location>
    <ligand>
        <name>[4Fe-4S] cluster</name>
        <dbReference type="ChEBI" id="CHEBI:49883"/>
        <label>2</label>
    </ligand>
</feature>
<feature type="binding site" evidence="1">
    <location>
        <position position="85"/>
    </location>
    <ligand>
        <name>[4Fe-4S] cluster</name>
        <dbReference type="ChEBI" id="CHEBI:49883"/>
        <label>2</label>
    </ligand>
</feature>
<feature type="helix" evidence="3">
    <location>
        <begin position="3"/>
        <end position="11"/>
    </location>
</feature>
<feature type="turn" evidence="3">
    <location>
        <begin position="18"/>
        <end position="20"/>
    </location>
</feature>
<feature type="strand" evidence="3">
    <location>
        <begin position="33"/>
        <end position="35"/>
    </location>
</feature>
<feature type="turn" evidence="3">
    <location>
        <begin position="37"/>
        <end position="39"/>
    </location>
</feature>
<feature type="helix" evidence="3">
    <location>
        <begin position="45"/>
        <end position="49"/>
    </location>
</feature>
<feature type="strand" evidence="3">
    <location>
        <begin position="55"/>
        <end position="60"/>
    </location>
</feature>
<feature type="turn" evidence="3">
    <location>
        <begin position="61"/>
        <end position="64"/>
    </location>
</feature>
<feature type="strand" evidence="3">
    <location>
        <begin position="65"/>
        <end position="71"/>
    </location>
</feature>
<feature type="turn" evidence="3">
    <location>
        <begin position="72"/>
        <end position="74"/>
    </location>
</feature>
<feature type="helix" evidence="3">
    <location>
        <begin position="80"/>
        <end position="84"/>
    </location>
</feature>
<feature type="strand" evidence="3">
    <location>
        <begin position="90"/>
        <end position="92"/>
    </location>
</feature>
<feature type="strand" evidence="3">
    <location>
        <begin position="100"/>
        <end position="102"/>
    </location>
</feature>
<feature type="helix" evidence="3">
    <location>
        <begin position="103"/>
        <end position="106"/>
    </location>
</feature>
<feature type="strand" evidence="3">
    <location>
        <begin position="107"/>
        <end position="116"/>
    </location>
</feature>
<feature type="turn" evidence="3">
    <location>
        <begin position="118"/>
        <end position="120"/>
    </location>
</feature>
<feature type="strand" evidence="3">
    <location>
        <begin position="123"/>
        <end position="126"/>
    </location>
</feature>
<feature type="helix" evidence="3">
    <location>
        <begin position="127"/>
        <end position="139"/>
    </location>
</feature>
<feature type="helix" evidence="3">
    <location>
        <begin position="143"/>
        <end position="147"/>
    </location>
</feature>
<feature type="helix" evidence="3">
    <location>
        <begin position="149"/>
        <end position="152"/>
    </location>
</feature>
<feature type="helix" evidence="3">
    <location>
        <begin position="156"/>
        <end position="162"/>
    </location>
</feature>